<evidence type="ECO:0000303" key="1">
    <source>
    </source>
</evidence>
<evidence type="ECO:0000305" key="2"/>
<evidence type="ECO:0000312" key="3">
    <source>
        <dbReference type="FlyBase" id="FBgn0003676"/>
    </source>
</evidence>
<comment type="function">
    <text>Molecular chaperone; assists the folding of proteins upon ATP hydrolysis. Known to play a role, in vitro, in the folding of actin and tubulin.</text>
</comment>
<comment type="subunit">
    <text>Heterooligomeric complex of about 850 to 900 kDa that forms two stacked rings, 12 to 16 nm in diameter.</text>
</comment>
<comment type="subcellular location">
    <subcellularLocation>
        <location>Cytoplasm</location>
    </subcellularLocation>
</comment>
<comment type="similarity">
    <text evidence="2">Belongs to the TCP-1 chaperonin family.</text>
</comment>
<keyword id="KW-0067">ATP-binding</keyword>
<keyword id="KW-0143">Chaperone</keyword>
<keyword id="KW-0963">Cytoplasm</keyword>
<keyword id="KW-0547">Nucleotide-binding</keyword>
<keyword id="KW-1185">Reference proteome</keyword>
<gene>
    <name evidence="3" type="primary">CCT1</name>
    <name type="synonym">CCT-1</name>
    <name type="synonym">T-cp1</name>
    <name evidence="1" type="synonym">Tcp-1</name>
    <name evidence="3" type="ORF">CG5374</name>
</gene>
<reference key="1">
    <citation type="journal article" date="1988" name="Gene">
        <title>A Drosophila melanogaster gene encodes a protein homologous to the mouse t complex polypeptide 1.</title>
        <authorList>
            <person name="Ursic D."/>
            <person name="Ganetzky B."/>
        </authorList>
    </citation>
    <scope>NUCLEOTIDE SEQUENCE [MRNA]</scope>
</reference>
<reference key="2">
    <citation type="journal article" date="2000" name="Science">
        <title>The genome sequence of Drosophila melanogaster.</title>
        <authorList>
            <person name="Adams M.D."/>
            <person name="Celniker S.E."/>
            <person name="Holt R.A."/>
            <person name="Evans C.A."/>
            <person name="Gocayne J.D."/>
            <person name="Amanatides P.G."/>
            <person name="Scherer S.E."/>
            <person name="Li P.W."/>
            <person name="Hoskins R.A."/>
            <person name="Galle R.F."/>
            <person name="George R.A."/>
            <person name="Lewis S.E."/>
            <person name="Richards S."/>
            <person name="Ashburner M."/>
            <person name="Henderson S.N."/>
            <person name="Sutton G.G."/>
            <person name="Wortman J.R."/>
            <person name="Yandell M.D."/>
            <person name="Zhang Q."/>
            <person name="Chen L.X."/>
            <person name="Brandon R.C."/>
            <person name="Rogers Y.-H.C."/>
            <person name="Blazej R.G."/>
            <person name="Champe M."/>
            <person name="Pfeiffer B.D."/>
            <person name="Wan K.H."/>
            <person name="Doyle C."/>
            <person name="Baxter E.G."/>
            <person name="Helt G."/>
            <person name="Nelson C.R."/>
            <person name="Miklos G.L.G."/>
            <person name="Abril J.F."/>
            <person name="Agbayani A."/>
            <person name="An H.-J."/>
            <person name="Andrews-Pfannkoch C."/>
            <person name="Baldwin D."/>
            <person name="Ballew R.M."/>
            <person name="Basu A."/>
            <person name="Baxendale J."/>
            <person name="Bayraktaroglu L."/>
            <person name="Beasley E.M."/>
            <person name="Beeson K.Y."/>
            <person name="Benos P.V."/>
            <person name="Berman B.P."/>
            <person name="Bhandari D."/>
            <person name="Bolshakov S."/>
            <person name="Borkova D."/>
            <person name="Botchan M.R."/>
            <person name="Bouck J."/>
            <person name="Brokstein P."/>
            <person name="Brottier P."/>
            <person name="Burtis K.C."/>
            <person name="Busam D.A."/>
            <person name="Butler H."/>
            <person name="Cadieu E."/>
            <person name="Center A."/>
            <person name="Chandra I."/>
            <person name="Cherry J.M."/>
            <person name="Cawley S."/>
            <person name="Dahlke C."/>
            <person name="Davenport L.B."/>
            <person name="Davies P."/>
            <person name="de Pablos B."/>
            <person name="Delcher A."/>
            <person name="Deng Z."/>
            <person name="Mays A.D."/>
            <person name="Dew I."/>
            <person name="Dietz S.M."/>
            <person name="Dodson K."/>
            <person name="Doup L.E."/>
            <person name="Downes M."/>
            <person name="Dugan-Rocha S."/>
            <person name="Dunkov B.C."/>
            <person name="Dunn P."/>
            <person name="Durbin K.J."/>
            <person name="Evangelista C.C."/>
            <person name="Ferraz C."/>
            <person name="Ferriera S."/>
            <person name="Fleischmann W."/>
            <person name="Fosler C."/>
            <person name="Gabrielian A.E."/>
            <person name="Garg N.S."/>
            <person name="Gelbart W.M."/>
            <person name="Glasser K."/>
            <person name="Glodek A."/>
            <person name="Gong F."/>
            <person name="Gorrell J.H."/>
            <person name="Gu Z."/>
            <person name="Guan P."/>
            <person name="Harris M."/>
            <person name="Harris N.L."/>
            <person name="Harvey D.A."/>
            <person name="Heiman T.J."/>
            <person name="Hernandez J.R."/>
            <person name="Houck J."/>
            <person name="Hostin D."/>
            <person name="Houston K.A."/>
            <person name="Howland T.J."/>
            <person name="Wei M.-H."/>
            <person name="Ibegwam C."/>
            <person name="Jalali M."/>
            <person name="Kalush F."/>
            <person name="Karpen G.H."/>
            <person name="Ke Z."/>
            <person name="Kennison J.A."/>
            <person name="Ketchum K.A."/>
            <person name="Kimmel B.E."/>
            <person name="Kodira C.D."/>
            <person name="Kraft C.L."/>
            <person name="Kravitz S."/>
            <person name="Kulp D."/>
            <person name="Lai Z."/>
            <person name="Lasko P."/>
            <person name="Lei Y."/>
            <person name="Levitsky A.A."/>
            <person name="Li J.H."/>
            <person name="Li Z."/>
            <person name="Liang Y."/>
            <person name="Lin X."/>
            <person name="Liu X."/>
            <person name="Mattei B."/>
            <person name="McIntosh T.C."/>
            <person name="McLeod M.P."/>
            <person name="McPherson D."/>
            <person name="Merkulov G."/>
            <person name="Milshina N.V."/>
            <person name="Mobarry C."/>
            <person name="Morris J."/>
            <person name="Moshrefi A."/>
            <person name="Mount S.M."/>
            <person name="Moy M."/>
            <person name="Murphy B."/>
            <person name="Murphy L."/>
            <person name="Muzny D.M."/>
            <person name="Nelson D.L."/>
            <person name="Nelson D.R."/>
            <person name="Nelson K.A."/>
            <person name="Nixon K."/>
            <person name="Nusskern D.R."/>
            <person name="Pacleb J.M."/>
            <person name="Palazzolo M."/>
            <person name="Pittman G.S."/>
            <person name="Pan S."/>
            <person name="Pollard J."/>
            <person name="Puri V."/>
            <person name="Reese M.G."/>
            <person name="Reinert K."/>
            <person name="Remington K."/>
            <person name="Saunders R.D.C."/>
            <person name="Scheeler F."/>
            <person name="Shen H."/>
            <person name="Shue B.C."/>
            <person name="Siden-Kiamos I."/>
            <person name="Simpson M."/>
            <person name="Skupski M.P."/>
            <person name="Smith T.J."/>
            <person name="Spier E."/>
            <person name="Spradling A.C."/>
            <person name="Stapleton M."/>
            <person name="Strong R."/>
            <person name="Sun E."/>
            <person name="Svirskas R."/>
            <person name="Tector C."/>
            <person name="Turner R."/>
            <person name="Venter E."/>
            <person name="Wang A.H."/>
            <person name="Wang X."/>
            <person name="Wang Z.-Y."/>
            <person name="Wassarman D.A."/>
            <person name="Weinstock G.M."/>
            <person name="Weissenbach J."/>
            <person name="Williams S.M."/>
            <person name="Woodage T."/>
            <person name="Worley K.C."/>
            <person name="Wu D."/>
            <person name="Yang S."/>
            <person name="Yao Q.A."/>
            <person name="Ye J."/>
            <person name="Yeh R.-F."/>
            <person name="Zaveri J.S."/>
            <person name="Zhan M."/>
            <person name="Zhang G."/>
            <person name="Zhao Q."/>
            <person name="Zheng L."/>
            <person name="Zheng X.H."/>
            <person name="Zhong F.N."/>
            <person name="Zhong W."/>
            <person name="Zhou X."/>
            <person name="Zhu S.C."/>
            <person name="Zhu X."/>
            <person name="Smith H.O."/>
            <person name="Gibbs R.A."/>
            <person name="Myers E.W."/>
            <person name="Rubin G.M."/>
            <person name="Venter J.C."/>
        </authorList>
    </citation>
    <scope>NUCLEOTIDE SEQUENCE [LARGE SCALE GENOMIC DNA]</scope>
    <source>
        <strain>Berkeley</strain>
    </source>
</reference>
<reference key="3">
    <citation type="journal article" date="2002" name="Genome Biol.">
        <title>Annotation of the Drosophila melanogaster euchromatic genome: a systematic review.</title>
        <authorList>
            <person name="Misra S."/>
            <person name="Crosby M.A."/>
            <person name="Mungall C.J."/>
            <person name="Matthews B.B."/>
            <person name="Campbell K.S."/>
            <person name="Hradecky P."/>
            <person name="Huang Y."/>
            <person name="Kaminker J.S."/>
            <person name="Millburn G.H."/>
            <person name="Prochnik S.E."/>
            <person name="Smith C.D."/>
            <person name="Tupy J.L."/>
            <person name="Whitfield E.J."/>
            <person name="Bayraktaroglu L."/>
            <person name="Berman B.P."/>
            <person name="Bettencourt B.R."/>
            <person name="Celniker S.E."/>
            <person name="de Grey A.D.N.J."/>
            <person name="Drysdale R.A."/>
            <person name="Harris N.L."/>
            <person name="Richter J."/>
            <person name="Russo S."/>
            <person name="Schroeder A.J."/>
            <person name="Shu S.Q."/>
            <person name="Stapleton M."/>
            <person name="Yamada C."/>
            <person name="Ashburner M."/>
            <person name="Gelbart W.M."/>
            <person name="Rubin G.M."/>
            <person name="Lewis S.E."/>
        </authorList>
    </citation>
    <scope>GENOME REANNOTATION</scope>
    <source>
        <strain>Berkeley</strain>
    </source>
</reference>
<reference key="4">
    <citation type="journal article" date="2002" name="Genome Biol.">
        <title>A Drosophila full-length cDNA resource.</title>
        <authorList>
            <person name="Stapleton M."/>
            <person name="Carlson J.W."/>
            <person name="Brokstein P."/>
            <person name="Yu C."/>
            <person name="Champe M."/>
            <person name="George R.A."/>
            <person name="Guarin H."/>
            <person name="Kronmiller B."/>
            <person name="Pacleb J.M."/>
            <person name="Park S."/>
            <person name="Wan K.H."/>
            <person name="Rubin G.M."/>
            <person name="Celniker S.E."/>
        </authorList>
    </citation>
    <scope>NUCLEOTIDE SEQUENCE [LARGE SCALE MRNA]</scope>
    <source>
        <strain>Berkeley</strain>
        <tissue>Embryo</tissue>
    </source>
</reference>
<organism>
    <name type="scientific">Drosophila melanogaster</name>
    <name type="common">Fruit fly</name>
    <dbReference type="NCBI Taxonomy" id="7227"/>
    <lineage>
        <taxon>Eukaryota</taxon>
        <taxon>Metazoa</taxon>
        <taxon>Ecdysozoa</taxon>
        <taxon>Arthropoda</taxon>
        <taxon>Hexapoda</taxon>
        <taxon>Insecta</taxon>
        <taxon>Pterygota</taxon>
        <taxon>Neoptera</taxon>
        <taxon>Endopterygota</taxon>
        <taxon>Diptera</taxon>
        <taxon>Brachycera</taxon>
        <taxon>Muscomorpha</taxon>
        <taxon>Ephydroidea</taxon>
        <taxon>Drosophilidae</taxon>
        <taxon>Drosophila</taxon>
        <taxon>Sophophora</taxon>
    </lineage>
</organism>
<dbReference type="EMBL" id="M21159">
    <property type="protein sequence ID" value="AAA28927.1"/>
    <property type="molecule type" value="mRNA"/>
</dbReference>
<dbReference type="EMBL" id="AE014297">
    <property type="protein sequence ID" value="AAF56009.1"/>
    <property type="molecule type" value="Genomic_DNA"/>
</dbReference>
<dbReference type="EMBL" id="AY118416">
    <property type="protein sequence ID" value="AAM48445.1"/>
    <property type="molecule type" value="mRNA"/>
</dbReference>
<dbReference type="PIR" id="JT0367">
    <property type="entry name" value="JT0367"/>
</dbReference>
<dbReference type="RefSeq" id="NP_524450.2">
    <property type="nucleotide sequence ID" value="NM_079726.4"/>
</dbReference>
<dbReference type="RefSeq" id="NP_732748.1">
    <property type="nucleotide sequence ID" value="NM_170016.2"/>
</dbReference>
<dbReference type="SMR" id="P12613"/>
<dbReference type="BioGRID" id="67604">
    <property type="interactions" value="42"/>
</dbReference>
<dbReference type="ComplexPortal" id="CPX-2772">
    <property type="entry name" value="Chaperonin-containing T-complex"/>
</dbReference>
<dbReference type="DIP" id="DIP-22081N"/>
<dbReference type="FunCoup" id="P12613">
    <property type="interactions" value="2167"/>
</dbReference>
<dbReference type="IntAct" id="P12613">
    <property type="interactions" value="2"/>
</dbReference>
<dbReference type="STRING" id="7227.FBpp0083684"/>
<dbReference type="PaxDb" id="7227-FBpp0083683"/>
<dbReference type="DNASU" id="42649"/>
<dbReference type="EnsemblMetazoa" id="FBtr0084290">
    <property type="protein sequence ID" value="FBpp0083683"/>
    <property type="gene ID" value="FBgn0003676"/>
</dbReference>
<dbReference type="EnsemblMetazoa" id="FBtr0084291">
    <property type="protein sequence ID" value="FBpp0083684"/>
    <property type="gene ID" value="FBgn0003676"/>
</dbReference>
<dbReference type="GeneID" id="42649"/>
<dbReference type="KEGG" id="dme:Dmel_CG5374"/>
<dbReference type="AGR" id="FB:FBgn0003676"/>
<dbReference type="CTD" id="42649"/>
<dbReference type="FlyBase" id="FBgn0003676">
    <property type="gene designation" value="CCT1"/>
</dbReference>
<dbReference type="VEuPathDB" id="VectorBase:FBgn0003676"/>
<dbReference type="eggNOG" id="KOG0360">
    <property type="taxonomic scope" value="Eukaryota"/>
</dbReference>
<dbReference type="GeneTree" id="ENSGT00550000074878"/>
<dbReference type="HOGENOM" id="CLU_008891_7_3_1"/>
<dbReference type="InParanoid" id="P12613"/>
<dbReference type="OMA" id="RGPNDYQ"/>
<dbReference type="OrthoDB" id="496at2759"/>
<dbReference type="PhylomeDB" id="P12613"/>
<dbReference type="BRENDA" id="3.6.4.B10">
    <property type="organism ID" value="1994"/>
</dbReference>
<dbReference type="Reactome" id="R-DME-390471">
    <property type="pathway name" value="Association of TriC/CCT with target proteins during biosynthesis"/>
</dbReference>
<dbReference type="Reactome" id="R-DME-6814122">
    <property type="pathway name" value="Cooperation of PDCL (PhLP1) and TRiC/CCT in G-protein beta folding"/>
</dbReference>
<dbReference type="BioGRID-ORCS" id="42649">
    <property type="hits" value="1 hit in 1 CRISPR screen"/>
</dbReference>
<dbReference type="ChiTaRS" id="T-cp1">
    <property type="organism name" value="fly"/>
</dbReference>
<dbReference type="GenomeRNAi" id="42649"/>
<dbReference type="PRO" id="PR:P12613"/>
<dbReference type="Proteomes" id="UP000000803">
    <property type="component" value="Chromosome 3R"/>
</dbReference>
<dbReference type="Bgee" id="FBgn0003676">
    <property type="expression patterns" value="Expressed in eye disc (Drosophila) and 158 other cell types or tissues"/>
</dbReference>
<dbReference type="ExpressionAtlas" id="P12613">
    <property type="expression patterns" value="baseline and differential"/>
</dbReference>
<dbReference type="GO" id="GO:0005832">
    <property type="term" value="C:chaperonin-containing T-complex"/>
    <property type="evidence" value="ECO:0000318"/>
    <property type="project" value="GO_Central"/>
</dbReference>
<dbReference type="GO" id="GO:0005829">
    <property type="term" value="C:cytosol"/>
    <property type="evidence" value="ECO:0007005"/>
    <property type="project" value="FlyBase"/>
</dbReference>
<dbReference type="GO" id="GO:0005524">
    <property type="term" value="F:ATP binding"/>
    <property type="evidence" value="ECO:0007669"/>
    <property type="project" value="UniProtKB-KW"/>
</dbReference>
<dbReference type="GO" id="GO:0016887">
    <property type="term" value="F:ATP hydrolysis activity"/>
    <property type="evidence" value="ECO:0007669"/>
    <property type="project" value="InterPro"/>
</dbReference>
<dbReference type="GO" id="GO:0140662">
    <property type="term" value="F:ATP-dependent protein folding chaperone"/>
    <property type="evidence" value="ECO:0007669"/>
    <property type="project" value="InterPro"/>
</dbReference>
<dbReference type="GO" id="GO:0051082">
    <property type="term" value="F:unfolded protein binding"/>
    <property type="evidence" value="ECO:0000318"/>
    <property type="project" value="GO_Central"/>
</dbReference>
<dbReference type="GO" id="GO:0030707">
    <property type="term" value="P:follicle cell of egg chamber development"/>
    <property type="evidence" value="ECO:0000315"/>
    <property type="project" value="FlyBase"/>
</dbReference>
<dbReference type="GO" id="GO:0006457">
    <property type="term" value="P:protein folding"/>
    <property type="evidence" value="ECO:0000318"/>
    <property type="project" value="GO_Central"/>
</dbReference>
<dbReference type="CDD" id="cd03335">
    <property type="entry name" value="TCP1_alpha"/>
    <property type="match status" value="1"/>
</dbReference>
<dbReference type="FunFam" id="3.50.7.10:FF:000009">
    <property type="entry name" value="T-complex protein 1 subunit alpha"/>
    <property type="match status" value="1"/>
</dbReference>
<dbReference type="FunFam" id="1.10.560.10:FF:000045">
    <property type="entry name" value="T-complex protein 1 subunit eta"/>
    <property type="match status" value="1"/>
</dbReference>
<dbReference type="Gene3D" id="3.50.7.10">
    <property type="entry name" value="GroEL"/>
    <property type="match status" value="1"/>
</dbReference>
<dbReference type="Gene3D" id="1.10.560.10">
    <property type="entry name" value="GroEL-like equatorial domain"/>
    <property type="match status" value="1"/>
</dbReference>
<dbReference type="Gene3D" id="3.30.260.10">
    <property type="entry name" value="TCP-1-like chaperonin intermediate domain"/>
    <property type="match status" value="1"/>
</dbReference>
<dbReference type="InterPro" id="IPR012715">
    <property type="entry name" value="Chap_CCT_alpha"/>
</dbReference>
<dbReference type="InterPro" id="IPR017998">
    <property type="entry name" value="Chaperone_TCP-1"/>
</dbReference>
<dbReference type="InterPro" id="IPR002194">
    <property type="entry name" value="Chaperonin_TCP-1_CS"/>
</dbReference>
<dbReference type="InterPro" id="IPR002423">
    <property type="entry name" value="Cpn60/GroEL/TCP-1"/>
</dbReference>
<dbReference type="InterPro" id="IPR027409">
    <property type="entry name" value="GroEL-like_apical_dom_sf"/>
</dbReference>
<dbReference type="InterPro" id="IPR027413">
    <property type="entry name" value="GROEL-like_equatorial_sf"/>
</dbReference>
<dbReference type="InterPro" id="IPR027410">
    <property type="entry name" value="TCP-1-like_intermed_sf"/>
</dbReference>
<dbReference type="InterPro" id="IPR053374">
    <property type="entry name" value="TCP-1_chaperonin"/>
</dbReference>
<dbReference type="InterPro" id="IPR054827">
    <property type="entry name" value="thermosome_alpha"/>
</dbReference>
<dbReference type="NCBIfam" id="TIGR02340">
    <property type="entry name" value="chap_CCT_alpha"/>
    <property type="match status" value="1"/>
</dbReference>
<dbReference type="NCBIfam" id="NF041082">
    <property type="entry name" value="thermosome_alpha"/>
    <property type="match status" value="1"/>
</dbReference>
<dbReference type="NCBIfam" id="NF041083">
    <property type="entry name" value="thermosome_beta"/>
    <property type="match status" value="1"/>
</dbReference>
<dbReference type="PANTHER" id="PTHR11353">
    <property type="entry name" value="CHAPERONIN"/>
    <property type="match status" value="1"/>
</dbReference>
<dbReference type="Pfam" id="PF00118">
    <property type="entry name" value="Cpn60_TCP1"/>
    <property type="match status" value="1"/>
</dbReference>
<dbReference type="PRINTS" id="PR00304">
    <property type="entry name" value="TCOMPLEXTCP1"/>
</dbReference>
<dbReference type="SUPFAM" id="SSF52029">
    <property type="entry name" value="GroEL apical domain-like"/>
    <property type="match status" value="1"/>
</dbReference>
<dbReference type="SUPFAM" id="SSF48592">
    <property type="entry name" value="GroEL equatorial domain-like"/>
    <property type="match status" value="1"/>
</dbReference>
<dbReference type="SUPFAM" id="SSF54849">
    <property type="entry name" value="GroEL-intermediate domain like"/>
    <property type="match status" value="1"/>
</dbReference>
<dbReference type="PROSITE" id="PS00750">
    <property type="entry name" value="TCP1_1"/>
    <property type="match status" value="1"/>
</dbReference>
<dbReference type="PROSITE" id="PS00751">
    <property type="entry name" value="TCP1_2"/>
    <property type="match status" value="1"/>
</dbReference>
<dbReference type="PROSITE" id="PS00995">
    <property type="entry name" value="TCP1_3"/>
    <property type="match status" value="1"/>
</dbReference>
<accession>P12613</accession>
<accession>Q9VCZ6</accession>
<protein>
    <recommendedName>
        <fullName>T-complex protein 1 subunit alpha</fullName>
        <shortName>TCP-1-alpha</shortName>
    </recommendedName>
    <alternativeName>
        <fullName>CCT-alpha</fullName>
    </alternativeName>
    <alternativeName>
        <fullName evidence="3">Chaperonin containing TCP1 subunit 1</fullName>
    </alternativeName>
</protein>
<sequence length="557" mass="59557">MSTLASPLSIAGTRQSGASVRTQNVMAALSISNIVKSSLGPVGLDKMLVDDIGDVTVTNDGATILRLLEVEHPAAKVLVELAQLQDEEVGDGTTSVVILAAELLKNADELVKQKIHPTSIISGYRIACKEACKYISEHLTAPVDELGRDSLINIAKTSMSSKIIGADAEFFSAMVVDAAQSVKITDPRGQAAYSIKAINVLKAHGKSARESVLIPGYALNCTIASQQMPKKIVNAKIACLDFSLQKTKMKMGVQVLINDPDKLEAIRARELDITKERINMILGTGVNVVLVSGGVDDLCMKYFVEAGAMAVRRVKKSDLKIIAKATGAAFITSLTNMDGEESFDASMVGEAAEVAQERICDDELILIKGTKARAAASIILRGPNDFYCDEMERSVHDALCVVKRVLESKKVVAGGGCVEAALSIYLENFATSLASREQLAIAEFAKSLLVIPKTLSVNAAKDATDLVAKLRSYHNSSQTKPERSDLKWTGLDLIEGVVRDNKKAGVLEPAMSKIKSLKFATEAAITILRIDDMIKLNPEDKSGKSYADACAAGELDG</sequence>
<feature type="chain" id="PRO_0000128310" description="T-complex protein 1 subunit alpha">
    <location>
        <begin position="1"/>
        <end position="557"/>
    </location>
</feature>
<feature type="sequence conflict" description="In Ref. 1; AAA28927." evidence="2" ref="1">
    <original>GAS</original>
    <variation>RRI</variation>
    <location>
        <begin position="17"/>
        <end position="19"/>
    </location>
</feature>
<feature type="sequence conflict" description="In Ref. 1; AAA28927." evidence="2" ref="1">
    <original>A</original>
    <variation>V</variation>
    <location>
        <position position="192"/>
    </location>
</feature>
<feature type="sequence conflict" description="In Ref. 1; AAA28927." evidence="2" ref="1">
    <original>I</original>
    <variation>V</variation>
    <location>
        <position position="198"/>
    </location>
</feature>
<feature type="sequence conflict" description="In Ref. 1; AAA28927." evidence="2" ref="1">
    <original>L</original>
    <variation>H</variation>
    <location>
        <position position="240"/>
    </location>
</feature>
<feature type="sequence conflict" description="In Ref. 1; AAA28927." evidence="2" ref="1">
    <original>A</original>
    <variation>R</variation>
    <location>
        <position position="413"/>
    </location>
</feature>
<name>TCPA_DROME</name>
<proteinExistence type="evidence at transcript level"/>